<accession>Q9HWG3</accession>
<accession>P72175</accession>
<name>PCHD_PSEAE</name>
<reference key="1">
    <citation type="journal article" date="1997" name="J. Bacteriol.">
        <title>Biosynthesis of pyochelin and dihydroaeruginoic acid requires the iron-regulated pchDCBA operon in Pseudomonas aeruginosa.</title>
        <authorList>
            <person name="Serino L."/>
            <person name="Reimmann C."/>
            <person name="Visca P."/>
            <person name="Beyeler M."/>
            <person name="Chiesa V.D."/>
            <person name="Haas D."/>
        </authorList>
    </citation>
    <scope>NUCLEOTIDE SEQUENCE [GENOMIC DNA]</scope>
    <scope>FUNCTION</scope>
    <scope>PATHWAY</scope>
    <scope>INDUCTION</scope>
    <scope>DISRUPTION PHENOTYPE</scope>
    <source>
        <strain>ATCC 15692 / DSM 22644 / CIP 104116 / JCM 14847 / LMG 12228 / 1C / PRS 101 / PAO1</strain>
    </source>
</reference>
<reference key="2">
    <citation type="journal article" date="2000" name="Nature">
        <title>Complete genome sequence of Pseudomonas aeruginosa PAO1, an opportunistic pathogen.</title>
        <authorList>
            <person name="Stover C.K."/>
            <person name="Pham X.-Q.T."/>
            <person name="Erwin A.L."/>
            <person name="Mizoguchi S.D."/>
            <person name="Warrener P."/>
            <person name="Hickey M.J."/>
            <person name="Brinkman F.S.L."/>
            <person name="Hufnagle W.O."/>
            <person name="Kowalik D.J."/>
            <person name="Lagrou M."/>
            <person name="Garber R.L."/>
            <person name="Goltry L."/>
            <person name="Tolentino E."/>
            <person name="Westbrock-Wadman S."/>
            <person name="Yuan Y."/>
            <person name="Brody L.L."/>
            <person name="Coulter S.N."/>
            <person name="Folger K.R."/>
            <person name="Kas A."/>
            <person name="Larbig K."/>
            <person name="Lim R.M."/>
            <person name="Smith K.A."/>
            <person name="Spencer D.H."/>
            <person name="Wong G.K.-S."/>
            <person name="Wu Z."/>
            <person name="Paulsen I.T."/>
            <person name="Reizer J."/>
            <person name="Saier M.H. Jr."/>
            <person name="Hancock R.E.W."/>
            <person name="Lory S."/>
            <person name="Olson M.V."/>
        </authorList>
    </citation>
    <scope>NUCLEOTIDE SEQUENCE [LARGE SCALE GENOMIC DNA]</scope>
    <source>
        <strain>ATCC 15692 / DSM 22644 / CIP 104116 / JCM 14847 / LMG 12228 / 1C / PRS 101 / PAO1</strain>
    </source>
</reference>
<keyword id="KW-0002">3D-structure</keyword>
<keyword id="KW-0045">Antibiotic biosynthesis</keyword>
<keyword id="KW-0436">Ligase</keyword>
<keyword id="KW-1185">Reference proteome</keyword>
<evidence type="ECO:0000250" key="1">
    <source>
        <dbReference type="UniProtKB" id="A0A0H2ZF83"/>
    </source>
</evidence>
<evidence type="ECO:0000269" key="2">
    <source>
    </source>
</evidence>
<evidence type="ECO:0000303" key="3">
    <source>
    </source>
</evidence>
<evidence type="ECO:0000305" key="4"/>
<evidence type="ECO:0000312" key="5">
    <source>
        <dbReference type="EMBL" id="AAG07616.1"/>
    </source>
</evidence>
<evidence type="ECO:0007829" key="6">
    <source>
        <dbReference type="PDB" id="7TZ4"/>
    </source>
</evidence>
<protein>
    <recommendedName>
        <fullName evidence="4">Pyochelin synthase PchD</fullName>
        <ecNumber evidence="1">6.2.1.61</ecNumber>
    </recommendedName>
    <alternativeName>
        <fullName evidence="4">Nonribosomal peptide synthase PchD</fullName>
    </alternativeName>
    <alternativeName>
        <fullName evidence="4">Salicylate--[aryl-carrier protein] ligase</fullName>
    </alternativeName>
</protein>
<feature type="chain" id="PRO_0000454824" description="Pyochelin synthase PchD">
    <location>
        <begin position="1"/>
        <end position="547"/>
    </location>
</feature>
<feature type="sequence conflict" description="In Ref. 1; CAA57966." evidence="4" ref="1">
    <location>
        <position position="46"/>
    </location>
</feature>
<feature type="sequence conflict" description="In Ref. 1; CAA57966." evidence="4" ref="1">
    <original>R</original>
    <variation>A</variation>
    <location>
        <position position="262"/>
    </location>
</feature>
<feature type="sequence conflict" description="In Ref. 1; CAA57966." evidence="4" ref="1">
    <original>P</original>
    <variation>A</variation>
    <location>
        <position position="493"/>
    </location>
</feature>
<feature type="helix" evidence="6">
    <location>
        <begin position="19"/>
        <end position="27"/>
    </location>
</feature>
<feature type="helix" evidence="6">
    <location>
        <begin position="36"/>
        <end position="46"/>
    </location>
</feature>
<feature type="strand" evidence="6">
    <location>
        <begin position="50"/>
        <end position="54"/>
    </location>
</feature>
<feature type="strand" evidence="6">
    <location>
        <begin position="59"/>
        <end position="61"/>
    </location>
</feature>
<feature type="helix" evidence="6">
    <location>
        <begin position="62"/>
        <end position="78"/>
    </location>
</feature>
<feature type="strand" evidence="6">
    <location>
        <begin position="86"/>
        <end position="89"/>
    </location>
</feature>
<feature type="helix" evidence="6">
    <location>
        <begin position="95"/>
        <end position="107"/>
    </location>
</feature>
<feature type="strand" evidence="6">
    <location>
        <begin position="110"/>
        <end position="113"/>
    </location>
</feature>
<feature type="helix" evidence="6">
    <location>
        <begin position="120"/>
        <end position="130"/>
    </location>
</feature>
<feature type="strand" evidence="6">
    <location>
        <begin position="133"/>
        <end position="139"/>
    </location>
</feature>
<feature type="helix" evidence="6">
    <location>
        <begin position="147"/>
        <end position="155"/>
    </location>
</feature>
<feature type="strand" evidence="6">
    <location>
        <begin position="160"/>
        <end position="166"/>
    </location>
</feature>
<feature type="strand" evidence="6">
    <location>
        <begin position="172"/>
        <end position="175"/>
    </location>
</feature>
<feature type="helix" evidence="6">
    <location>
        <begin position="176"/>
        <end position="180"/>
    </location>
</feature>
<feature type="strand" evidence="6">
    <location>
        <begin position="193"/>
        <end position="199"/>
    </location>
</feature>
<feature type="strand" evidence="6">
    <location>
        <begin position="203"/>
        <end position="206"/>
    </location>
</feature>
<feature type="strand" evidence="6">
    <location>
        <begin position="209"/>
        <end position="213"/>
    </location>
</feature>
<feature type="helix" evidence="6">
    <location>
        <begin position="214"/>
        <end position="228"/>
    </location>
</feature>
<feature type="strand" evidence="6">
    <location>
        <begin position="235"/>
        <end position="237"/>
    </location>
</feature>
<feature type="helix" evidence="6">
    <location>
        <begin position="245"/>
        <end position="249"/>
    </location>
</feature>
<feature type="helix" evidence="6">
    <location>
        <begin position="252"/>
        <end position="258"/>
    </location>
</feature>
<feature type="strand" evidence="6">
    <location>
        <begin position="262"/>
        <end position="264"/>
    </location>
</feature>
<feature type="helix" evidence="6">
    <location>
        <begin position="271"/>
        <end position="281"/>
    </location>
</feature>
<feature type="strand" evidence="6">
    <location>
        <begin position="285"/>
        <end position="288"/>
    </location>
</feature>
<feature type="helix" evidence="6">
    <location>
        <begin position="290"/>
        <end position="297"/>
    </location>
</feature>
<feature type="helix" evidence="6">
    <location>
        <begin position="301"/>
        <end position="304"/>
    </location>
</feature>
<feature type="strand" evidence="6">
    <location>
        <begin position="312"/>
        <end position="318"/>
    </location>
</feature>
<feature type="helix" evidence="6">
    <location>
        <begin position="322"/>
        <end position="325"/>
    </location>
</feature>
<feature type="helix" evidence="6">
    <location>
        <begin position="328"/>
        <end position="332"/>
    </location>
</feature>
<feature type="strand" evidence="6">
    <location>
        <begin position="334"/>
        <end position="342"/>
    </location>
</feature>
<feature type="strand" evidence="6">
    <location>
        <begin position="345"/>
        <end position="349"/>
    </location>
</feature>
<feature type="helix" evidence="6">
    <location>
        <begin position="356"/>
        <end position="359"/>
    </location>
</feature>
<feature type="strand" evidence="6">
    <location>
        <begin position="365"/>
        <end position="368"/>
    </location>
</feature>
<feature type="strand" evidence="6">
    <location>
        <begin position="372"/>
        <end position="376"/>
    </location>
</feature>
<feature type="strand" evidence="6">
    <location>
        <begin position="389"/>
        <end position="394"/>
    </location>
</feature>
<feature type="helix" evidence="6">
    <location>
        <begin position="406"/>
        <end position="412"/>
    </location>
</feature>
<feature type="strand" evidence="6">
    <location>
        <begin position="419"/>
        <end position="427"/>
    </location>
</feature>
<feature type="strand" evidence="6">
    <location>
        <begin position="433"/>
        <end position="438"/>
    </location>
</feature>
<feature type="helix" evidence="6">
    <location>
        <begin position="439"/>
        <end position="441"/>
    </location>
</feature>
<feature type="strand" evidence="6">
    <location>
        <begin position="443"/>
        <end position="445"/>
    </location>
</feature>
<feature type="strand" evidence="6">
    <location>
        <begin position="448"/>
        <end position="450"/>
    </location>
</feature>
<feature type="helix" evidence="6">
    <location>
        <begin position="452"/>
        <end position="460"/>
    </location>
</feature>
<feature type="strand" evidence="6">
    <location>
        <begin position="465"/>
        <end position="475"/>
    </location>
</feature>
<feature type="turn" evidence="6">
    <location>
        <begin position="476"/>
        <end position="478"/>
    </location>
</feature>
<feature type="strand" evidence="6">
    <location>
        <begin position="479"/>
        <end position="488"/>
    </location>
</feature>
<feature type="helix" evidence="6">
    <location>
        <begin position="495"/>
        <end position="504"/>
    </location>
</feature>
<feature type="helix" evidence="6">
    <location>
        <begin position="509"/>
        <end position="511"/>
    </location>
</feature>
<feature type="strand" evidence="6">
    <location>
        <begin position="514"/>
        <end position="518"/>
    </location>
</feature>
<feature type="helix" evidence="6">
    <location>
        <begin position="532"/>
        <end position="541"/>
    </location>
</feature>
<gene>
    <name evidence="3" type="primary">pchD</name>
    <name evidence="5" type="ordered locus">PA4228</name>
</gene>
<organism>
    <name type="scientific">Pseudomonas aeruginosa (strain ATCC 15692 / DSM 22644 / CIP 104116 / JCM 14847 / LMG 12228 / 1C / PRS 101 / PAO1)</name>
    <dbReference type="NCBI Taxonomy" id="208964"/>
    <lineage>
        <taxon>Bacteria</taxon>
        <taxon>Pseudomonadati</taxon>
        <taxon>Pseudomonadota</taxon>
        <taxon>Gammaproteobacteria</taxon>
        <taxon>Pseudomonadales</taxon>
        <taxon>Pseudomonadaceae</taxon>
        <taxon>Pseudomonas</taxon>
    </lineage>
</organism>
<proteinExistence type="evidence at protein level"/>
<comment type="function">
    <text evidence="1 2">Involved in the biosynthesis of the siderophore pyochelin (PubMed:8982005). Specifically adenylates salicylate and loads it onto the holo form of PchE via a thioester linkage to the phosphopanthetheine moiety (By similarity). Is also involved in the synthesis of the antifungal antibiotic dihydroaeruginoic acid (Dha or hydroxyphenyl-thiazolinyl-carboxylate), a precursor of pyochelin (PubMed:8982005).</text>
</comment>
<comment type="catalytic activity">
    <reaction evidence="1">
        <text>salicylate + holo-[ACP] + ATP = salicyl-[ACP] + AMP + diphosphate</text>
        <dbReference type="Rhea" id="RHEA:61648"/>
        <dbReference type="Rhea" id="RHEA-COMP:9685"/>
        <dbReference type="Rhea" id="RHEA-COMP:19022"/>
        <dbReference type="ChEBI" id="CHEBI:30616"/>
        <dbReference type="ChEBI" id="CHEBI:30762"/>
        <dbReference type="ChEBI" id="CHEBI:33019"/>
        <dbReference type="ChEBI" id="CHEBI:64479"/>
        <dbReference type="ChEBI" id="CHEBI:86464"/>
        <dbReference type="ChEBI" id="CHEBI:456215"/>
        <dbReference type="EC" id="6.2.1.61"/>
    </reaction>
    <physiologicalReaction direction="left-to-right" evidence="1">
        <dbReference type="Rhea" id="RHEA:61649"/>
    </physiologicalReaction>
</comment>
<comment type="pathway">
    <text evidence="2">Siderophore biosynthesis.</text>
</comment>
<comment type="pathway">
    <text evidence="2">Antifungal biosynthesis.</text>
</comment>
<comment type="induction">
    <text evidence="2">Part of the pchDCBA operon. Is probably positively controlled by PchR. Repressed by iron.</text>
</comment>
<comment type="disruption phenotype">
    <text evidence="2">Insertion mutant does not produce Dha and pyochelin.</text>
</comment>
<comment type="similarity">
    <text evidence="4">Belongs to the ATP-dependent AMP-binding enzyme family.</text>
</comment>
<sequence>MTSSPVTPSAVDDAPDWPAAFVRRYLDAGHWQDQSFAEALATSAARHPRRIALCDDDQRLSYADLLQRCRRLAAGLRQAGLAHGDTVVLHLPNGIAFVETCFALFQLGVRPVLALPAHRQHEISGFCRFAEAKAYIGAERIDGFDPRPMARELLASGACRMALIHGEAEAPLQALAPLYQADALEDCAARAEDIACFQLSGGTTGTPKLIPRRHREYLYNVRASAEVCGFDEHTVYLTGLPMAHNFTLCCPGVIGTLLASGRVVVSQRADPEHCFALIARERVTHTALVPPLAMLWLDAQESRRADLSSLRLLQVGGSRLGSSAAQRVEPVLGCQLQQVLGMAEGLICYTRLDDPPERVLHTQGRPLSPDDEVRVVDAEGREVGPGEVGELTVRGPYTIRGYYRLPEHNAKAFSADGFYRTGDRVSRDKDGYLVVEGRDKDQINRGGEKIAAEEVENLLIAHPQVHDATVVAMPDSLLGERTCAFVIPRQPAPSALKLKQYLHACGLAAFKVPDRIELVPAFPQTGIGKISKKDLRERLRRELEARA</sequence>
<dbReference type="EC" id="6.2.1.61" evidence="1"/>
<dbReference type="EMBL" id="X82644">
    <property type="protein sequence ID" value="CAA57966.1"/>
    <property type="molecule type" value="Genomic_DNA"/>
</dbReference>
<dbReference type="EMBL" id="AE004091">
    <property type="protein sequence ID" value="AAG07616.1"/>
    <property type="molecule type" value="Genomic_DNA"/>
</dbReference>
<dbReference type="PIR" id="G83116">
    <property type="entry name" value="G83116"/>
</dbReference>
<dbReference type="RefSeq" id="NP_252918.1">
    <property type="nucleotide sequence ID" value="NC_002516.2"/>
</dbReference>
<dbReference type="RefSeq" id="WP_003114688.1">
    <property type="nucleotide sequence ID" value="NZ_QZGE01000028.1"/>
</dbReference>
<dbReference type="PDB" id="7TYB">
    <property type="method" value="X-ray"/>
    <property type="resolution" value="2.11 A"/>
    <property type="chains" value="A=1-547"/>
</dbReference>
<dbReference type="PDB" id="7TZ4">
    <property type="method" value="X-ray"/>
    <property type="resolution" value="1.69 A"/>
    <property type="chains" value="A=1-547"/>
</dbReference>
<dbReference type="PDBsum" id="7TYB"/>
<dbReference type="PDBsum" id="7TZ4"/>
<dbReference type="SMR" id="Q9HWG3"/>
<dbReference type="FunCoup" id="Q9HWG3">
    <property type="interactions" value="40"/>
</dbReference>
<dbReference type="STRING" id="208964.PA4228"/>
<dbReference type="ChEMBL" id="CHEMBL3308937"/>
<dbReference type="PaxDb" id="208964-PA4228"/>
<dbReference type="GeneID" id="880566"/>
<dbReference type="KEGG" id="pae:PA4228"/>
<dbReference type="PATRIC" id="fig|208964.12.peg.4429"/>
<dbReference type="PseudoCAP" id="PA4228"/>
<dbReference type="HOGENOM" id="CLU_000022_59_7_6"/>
<dbReference type="InParanoid" id="Q9HWG3"/>
<dbReference type="OrthoDB" id="9803968at2"/>
<dbReference type="PhylomeDB" id="Q9HWG3"/>
<dbReference type="BioCyc" id="MetaCyc:MONOMER-15301"/>
<dbReference type="BioCyc" id="PAER208964:G1FZ6-4301-MONOMER"/>
<dbReference type="PHI-base" id="PHI:6938"/>
<dbReference type="PHI-base" id="PHI:6989"/>
<dbReference type="Proteomes" id="UP000002438">
    <property type="component" value="Chromosome"/>
</dbReference>
<dbReference type="GO" id="GO:0016878">
    <property type="term" value="F:acid-thiol ligase activity"/>
    <property type="evidence" value="ECO:0007669"/>
    <property type="project" value="UniProtKB-ARBA"/>
</dbReference>
<dbReference type="GO" id="GO:0017000">
    <property type="term" value="P:antibiotic biosynthetic process"/>
    <property type="evidence" value="ECO:0007669"/>
    <property type="project" value="UniProtKB-KW"/>
</dbReference>
<dbReference type="CDD" id="cd05920">
    <property type="entry name" value="23DHB-AMP_lg"/>
    <property type="match status" value="1"/>
</dbReference>
<dbReference type="FunFam" id="3.30.300.30:FF:000008">
    <property type="entry name" value="2,3-dihydroxybenzoate-AMP ligase"/>
    <property type="match status" value="1"/>
</dbReference>
<dbReference type="FunFam" id="2.30.38.10:FF:000003">
    <property type="entry name" value="Vibriobactin-specific 2,3-dihydroxybenzoate-AMP ligase"/>
    <property type="match status" value="1"/>
</dbReference>
<dbReference type="FunFam" id="3.40.50.980:FF:000003">
    <property type="entry name" value="Vibriobactin-specific 2,3-dihydroxybenzoate-AMP ligase"/>
    <property type="match status" value="1"/>
</dbReference>
<dbReference type="Gene3D" id="3.30.300.30">
    <property type="match status" value="1"/>
</dbReference>
<dbReference type="Gene3D" id="3.40.50.980">
    <property type="match status" value="2"/>
</dbReference>
<dbReference type="Gene3D" id="2.30.38.10">
    <property type="entry name" value="Luciferase, Domain 3"/>
    <property type="match status" value="1"/>
</dbReference>
<dbReference type="InterPro" id="IPR025110">
    <property type="entry name" value="AMP-bd_C"/>
</dbReference>
<dbReference type="InterPro" id="IPR045851">
    <property type="entry name" value="AMP-bd_C_sf"/>
</dbReference>
<dbReference type="InterPro" id="IPR020845">
    <property type="entry name" value="AMP-binding_CS"/>
</dbReference>
<dbReference type="InterPro" id="IPR000873">
    <property type="entry name" value="AMP-dep_synth/lig_dom"/>
</dbReference>
<dbReference type="InterPro" id="IPR050237">
    <property type="entry name" value="ATP-dep_AMP-bd_enzyme"/>
</dbReference>
<dbReference type="PANTHER" id="PTHR43767">
    <property type="entry name" value="LONG-CHAIN-FATTY-ACID--COA LIGASE"/>
    <property type="match status" value="1"/>
</dbReference>
<dbReference type="PANTHER" id="PTHR43767:SF1">
    <property type="entry name" value="NONRIBOSOMAL PEPTIDE SYNTHASE PES1 (EUROFUNG)-RELATED"/>
    <property type="match status" value="1"/>
</dbReference>
<dbReference type="Pfam" id="PF00501">
    <property type="entry name" value="AMP-binding"/>
    <property type="match status" value="1"/>
</dbReference>
<dbReference type="Pfam" id="PF13193">
    <property type="entry name" value="AMP-binding_C"/>
    <property type="match status" value="1"/>
</dbReference>
<dbReference type="SUPFAM" id="SSF56801">
    <property type="entry name" value="Acetyl-CoA synthetase-like"/>
    <property type="match status" value="1"/>
</dbReference>
<dbReference type="PROSITE" id="PS00455">
    <property type="entry name" value="AMP_BINDING"/>
    <property type="match status" value="1"/>
</dbReference>